<comment type="function">
    <text evidence="1">Has a role in meiosis.</text>
</comment>
<comment type="subcellular location">
    <subcellularLocation>
        <location evidence="2">Cytoplasm</location>
    </subcellularLocation>
    <text>Localizes to the barrier septum and cell tip.</text>
</comment>
<keyword id="KW-0963">Cytoplasm</keyword>
<keyword id="KW-0469">Meiosis</keyword>
<keyword id="KW-1185">Reference proteome</keyword>
<protein>
    <recommendedName>
        <fullName>Meiotically up-regulated gene 113 protein</fullName>
    </recommendedName>
</protein>
<dbReference type="EMBL" id="CU329670">
    <property type="protein sequence ID" value="CAA93303.1"/>
    <property type="molecule type" value="Genomic_DNA"/>
</dbReference>
<dbReference type="PIR" id="T38706">
    <property type="entry name" value="T38706"/>
</dbReference>
<dbReference type="RefSeq" id="NP_593937.1">
    <property type="nucleotide sequence ID" value="NM_001019365.2"/>
</dbReference>
<dbReference type="BioGRID" id="279576">
    <property type="interactions" value="53"/>
</dbReference>
<dbReference type="STRING" id="284812.Q10180"/>
<dbReference type="iPTMnet" id="Q10180"/>
<dbReference type="PaxDb" id="4896-SPAC3F10.05c.1"/>
<dbReference type="EnsemblFungi" id="SPAC3F10.05c.1">
    <property type="protein sequence ID" value="SPAC3F10.05c.1:pep"/>
    <property type="gene ID" value="SPAC3F10.05c"/>
</dbReference>
<dbReference type="GeneID" id="2543144"/>
<dbReference type="KEGG" id="spo:2543144"/>
<dbReference type="PomBase" id="SPAC3F10.05c">
    <property type="gene designation" value="mug113"/>
</dbReference>
<dbReference type="VEuPathDB" id="FungiDB:SPAC3F10.05c"/>
<dbReference type="eggNOG" id="ENOG502T9IB">
    <property type="taxonomic scope" value="Eukaryota"/>
</dbReference>
<dbReference type="HOGENOM" id="CLU_869211_0_0_1"/>
<dbReference type="InParanoid" id="Q10180"/>
<dbReference type="OMA" id="DWINPLL"/>
<dbReference type="PRO" id="PR:Q10180"/>
<dbReference type="Proteomes" id="UP000002485">
    <property type="component" value="Chromosome I"/>
</dbReference>
<dbReference type="GO" id="GO:0032153">
    <property type="term" value="C:cell division site"/>
    <property type="evidence" value="ECO:0007005"/>
    <property type="project" value="PomBase"/>
</dbReference>
<dbReference type="GO" id="GO:0051286">
    <property type="term" value="C:cell tip"/>
    <property type="evidence" value="ECO:0007005"/>
    <property type="project" value="PomBase"/>
</dbReference>
<dbReference type="GO" id="GO:0005737">
    <property type="term" value="C:cytoplasm"/>
    <property type="evidence" value="ECO:0000314"/>
    <property type="project" value="PomBase"/>
</dbReference>
<dbReference type="GO" id="GO:0003824">
    <property type="term" value="F:catalytic activity"/>
    <property type="evidence" value="ECO:0000255"/>
    <property type="project" value="PomBase"/>
</dbReference>
<dbReference type="GO" id="GO:0051321">
    <property type="term" value="P:meiotic cell cycle"/>
    <property type="evidence" value="ECO:0007669"/>
    <property type="project" value="UniProtKB-KW"/>
</dbReference>
<dbReference type="InterPro" id="IPR053006">
    <property type="entry name" value="Meiosis_regulatory"/>
</dbReference>
<dbReference type="InterPro" id="IPR018306">
    <property type="entry name" value="Phage_T5_Orf172_DNA-bd"/>
</dbReference>
<dbReference type="PANTHER" id="PTHR28094">
    <property type="entry name" value="MEIOTICALLY UP-REGULATED GENE 113 PROTEIN"/>
    <property type="match status" value="1"/>
</dbReference>
<dbReference type="PANTHER" id="PTHR28094:SF1">
    <property type="entry name" value="MEIOTICALLY UP-REGULATED GENE 113 PROTEIN"/>
    <property type="match status" value="1"/>
</dbReference>
<dbReference type="Pfam" id="PF10544">
    <property type="entry name" value="T5orf172"/>
    <property type="match status" value="1"/>
</dbReference>
<proteinExistence type="evidence at protein level"/>
<feature type="chain" id="PRO_0000116477" description="Meiotically up-regulated gene 113 protein">
    <location>
        <begin position="1"/>
        <end position="326"/>
    </location>
</feature>
<evidence type="ECO:0000269" key="1">
    <source>
    </source>
</evidence>
<evidence type="ECO:0000269" key="2">
    <source>
    </source>
</evidence>
<name>MU113_SCHPO</name>
<organism>
    <name type="scientific">Schizosaccharomyces pombe (strain 972 / ATCC 24843)</name>
    <name type="common">Fission yeast</name>
    <dbReference type="NCBI Taxonomy" id="284812"/>
    <lineage>
        <taxon>Eukaryota</taxon>
        <taxon>Fungi</taxon>
        <taxon>Dikarya</taxon>
        <taxon>Ascomycota</taxon>
        <taxon>Taphrinomycotina</taxon>
        <taxon>Schizosaccharomycetes</taxon>
        <taxon>Schizosaccharomycetales</taxon>
        <taxon>Schizosaccharomycetaceae</taxon>
        <taxon>Schizosaccharomyces</taxon>
    </lineage>
</organism>
<sequence>MKMPNTLHSVSISTDFPSPNVESEAADVNEYSSTSKFETLGNQSSTNLGFSNSLQDKWDCWKRDLWSIWWSLSRKATRFYRWLSRSLKWRPVTYETVYPQTYETQMSEPREVTTIVKDLNNGDSFVLNVTEPVDPEFLRANIPPVHRKHLPPRLSLVASPGTIPTRGVVVLEDWINPLLSERCKLLLQSELCNQDSYDCPGYICVYRFEQKNNPSVVLGDSTLIQISRVSDLQRHLREYPKNCAFSRSVLEIFPDPGKTSKPCQVSFKVERLVHKELNEYLSWMQPFTCDSCGSLHENWLQIDSKQWDQIRGVILRWVEYSRVIYA</sequence>
<gene>
    <name type="primary">mug113</name>
    <name type="ORF">SPAC3F10.05c</name>
</gene>
<accession>Q10180</accession>
<reference key="1">
    <citation type="journal article" date="2002" name="Nature">
        <title>The genome sequence of Schizosaccharomyces pombe.</title>
        <authorList>
            <person name="Wood V."/>
            <person name="Gwilliam R."/>
            <person name="Rajandream M.A."/>
            <person name="Lyne M.H."/>
            <person name="Lyne R."/>
            <person name="Stewart A."/>
            <person name="Sgouros J.G."/>
            <person name="Peat N."/>
            <person name="Hayles J."/>
            <person name="Baker S.G."/>
            <person name="Basham D."/>
            <person name="Bowman S."/>
            <person name="Brooks K."/>
            <person name="Brown D."/>
            <person name="Brown S."/>
            <person name="Chillingworth T."/>
            <person name="Churcher C.M."/>
            <person name="Collins M."/>
            <person name="Connor R."/>
            <person name="Cronin A."/>
            <person name="Davis P."/>
            <person name="Feltwell T."/>
            <person name="Fraser A."/>
            <person name="Gentles S."/>
            <person name="Goble A."/>
            <person name="Hamlin N."/>
            <person name="Harris D.E."/>
            <person name="Hidalgo J."/>
            <person name="Hodgson G."/>
            <person name="Holroyd S."/>
            <person name="Hornsby T."/>
            <person name="Howarth S."/>
            <person name="Huckle E.J."/>
            <person name="Hunt S."/>
            <person name="Jagels K."/>
            <person name="James K.D."/>
            <person name="Jones L."/>
            <person name="Jones M."/>
            <person name="Leather S."/>
            <person name="McDonald S."/>
            <person name="McLean J."/>
            <person name="Mooney P."/>
            <person name="Moule S."/>
            <person name="Mungall K.L."/>
            <person name="Murphy L.D."/>
            <person name="Niblett D."/>
            <person name="Odell C."/>
            <person name="Oliver K."/>
            <person name="O'Neil S."/>
            <person name="Pearson D."/>
            <person name="Quail M.A."/>
            <person name="Rabbinowitsch E."/>
            <person name="Rutherford K.M."/>
            <person name="Rutter S."/>
            <person name="Saunders D."/>
            <person name="Seeger K."/>
            <person name="Sharp S."/>
            <person name="Skelton J."/>
            <person name="Simmonds M.N."/>
            <person name="Squares R."/>
            <person name="Squares S."/>
            <person name="Stevens K."/>
            <person name="Taylor K."/>
            <person name="Taylor R.G."/>
            <person name="Tivey A."/>
            <person name="Walsh S.V."/>
            <person name="Warren T."/>
            <person name="Whitehead S."/>
            <person name="Woodward J.R."/>
            <person name="Volckaert G."/>
            <person name="Aert R."/>
            <person name="Robben J."/>
            <person name="Grymonprez B."/>
            <person name="Weltjens I."/>
            <person name="Vanstreels E."/>
            <person name="Rieger M."/>
            <person name="Schaefer M."/>
            <person name="Mueller-Auer S."/>
            <person name="Gabel C."/>
            <person name="Fuchs M."/>
            <person name="Duesterhoeft A."/>
            <person name="Fritzc C."/>
            <person name="Holzer E."/>
            <person name="Moestl D."/>
            <person name="Hilbert H."/>
            <person name="Borzym K."/>
            <person name="Langer I."/>
            <person name="Beck A."/>
            <person name="Lehrach H."/>
            <person name="Reinhardt R."/>
            <person name="Pohl T.M."/>
            <person name="Eger P."/>
            <person name="Zimmermann W."/>
            <person name="Wedler H."/>
            <person name="Wambutt R."/>
            <person name="Purnelle B."/>
            <person name="Goffeau A."/>
            <person name="Cadieu E."/>
            <person name="Dreano S."/>
            <person name="Gloux S."/>
            <person name="Lelaure V."/>
            <person name="Mottier S."/>
            <person name="Galibert F."/>
            <person name="Aves S.J."/>
            <person name="Xiang Z."/>
            <person name="Hunt C."/>
            <person name="Moore K."/>
            <person name="Hurst S.M."/>
            <person name="Lucas M."/>
            <person name="Rochet M."/>
            <person name="Gaillardin C."/>
            <person name="Tallada V.A."/>
            <person name="Garzon A."/>
            <person name="Thode G."/>
            <person name="Daga R.R."/>
            <person name="Cruzado L."/>
            <person name="Jimenez J."/>
            <person name="Sanchez M."/>
            <person name="del Rey F."/>
            <person name="Benito J."/>
            <person name="Dominguez A."/>
            <person name="Revuelta J.L."/>
            <person name="Moreno S."/>
            <person name="Armstrong J."/>
            <person name="Forsburg S.L."/>
            <person name="Cerutti L."/>
            <person name="Lowe T."/>
            <person name="McCombie W.R."/>
            <person name="Paulsen I."/>
            <person name="Potashkin J."/>
            <person name="Shpakovski G.V."/>
            <person name="Ussery D."/>
            <person name="Barrell B.G."/>
            <person name="Nurse P."/>
        </authorList>
    </citation>
    <scope>NUCLEOTIDE SEQUENCE [LARGE SCALE GENOMIC DNA]</scope>
    <source>
        <strain>972 / ATCC 24843</strain>
    </source>
</reference>
<reference key="2">
    <citation type="journal article" date="2005" name="Curr. Biol.">
        <title>A large-scale screen in S. pombe identifies seven novel genes required for critical meiotic events.</title>
        <authorList>
            <person name="Martin-Castellanos C."/>
            <person name="Blanco M."/>
            <person name="Rozalen A.E."/>
            <person name="Perez-Hidalgo L."/>
            <person name="Garcia A.I."/>
            <person name="Conde F."/>
            <person name="Mata J."/>
            <person name="Ellermeier C."/>
            <person name="Davis L."/>
            <person name="San-Segundo P."/>
            <person name="Smith G.R."/>
            <person name="Moreno S."/>
        </authorList>
    </citation>
    <scope>FUNCTION IN MEIOSIS</scope>
</reference>
<reference key="3">
    <citation type="journal article" date="2006" name="Nat. Biotechnol.">
        <title>ORFeome cloning and global analysis of protein localization in the fission yeast Schizosaccharomyces pombe.</title>
        <authorList>
            <person name="Matsuyama A."/>
            <person name="Arai R."/>
            <person name="Yashiroda Y."/>
            <person name="Shirai A."/>
            <person name="Kamata A."/>
            <person name="Sekido S."/>
            <person name="Kobayashi Y."/>
            <person name="Hashimoto A."/>
            <person name="Hamamoto M."/>
            <person name="Hiraoka Y."/>
            <person name="Horinouchi S."/>
            <person name="Yoshida M."/>
        </authorList>
    </citation>
    <scope>SUBCELLULAR LOCATION [LARGE SCALE ANALYSIS]</scope>
</reference>